<organism>
    <name type="scientific">Phaseolus vulgaris</name>
    <name type="common">Kidney bean</name>
    <name type="synonym">French bean</name>
    <dbReference type="NCBI Taxonomy" id="3885"/>
    <lineage>
        <taxon>Eukaryota</taxon>
        <taxon>Viridiplantae</taxon>
        <taxon>Streptophyta</taxon>
        <taxon>Embryophyta</taxon>
        <taxon>Tracheophyta</taxon>
        <taxon>Spermatophyta</taxon>
        <taxon>Magnoliopsida</taxon>
        <taxon>eudicotyledons</taxon>
        <taxon>Gunneridae</taxon>
        <taxon>Pentapetalae</taxon>
        <taxon>rosids</taxon>
        <taxon>fabids</taxon>
        <taxon>Fabales</taxon>
        <taxon>Fabaceae</taxon>
        <taxon>Papilionoideae</taxon>
        <taxon>50 kb inversion clade</taxon>
        <taxon>NPAAA clade</taxon>
        <taxon>indigoferoid/millettioid clade</taxon>
        <taxon>Phaseoleae</taxon>
        <taxon>Phaseolus</taxon>
    </lineage>
</organism>
<accession>A4GGE9</accession>
<proteinExistence type="inferred from homology"/>
<comment type="function">
    <text evidence="1">NDH shuttles electrons from NAD(P)H:plastoquinone, via FMN and iron-sulfur (Fe-S) centers, to quinones in the photosynthetic chain and possibly in a chloroplast respiratory chain. The immediate electron acceptor for the enzyme in this species is believed to be plastoquinone. Couples the redox reaction to proton translocation, and thus conserves the redox energy in a proton gradient (By similarity).</text>
</comment>
<comment type="catalytic activity">
    <reaction>
        <text>a plastoquinone + NADH + (n+1) H(+)(in) = a plastoquinol + NAD(+) + n H(+)(out)</text>
        <dbReference type="Rhea" id="RHEA:42608"/>
        <dbReference type="Rhea" id="RHEA-COMP:9561"/>
        <dbReference type="Rhea" id="RHEA-COMP:9562"/>
        <dbReference type="ChEBI" id="CHEBI:15378"/>
        <dbReference type="ChEBI" id="CHEBI:17757"/>
        <dbReference type="ChEBI" id="CHEBI:57540"/>
        <dbReference type="ChEBI" id="CHEBI:57945"/>
        <dbReference type="ChEBI" id="CHEBI:62192"/>
    </reaction>
</comment>
<comment type="catalytic activity">
    <reaction>
        <text>a plastoquinone + NADPH + (n+1) H(+)(in) = a plastoquinol + NADP(+) + n H(+)(out)</text>
        <dbReference type="Rhea" id="RHEA:42612"/>
        <dbReference type="Rhea" id="RHEA-COMP:9561"/>
        <dbReference type="Rhea" id="RHEA-COMP:9562"/>
        <dbReference type="ChEBI" id="CHEBI:15378"/>
        <dbReference type="ChEBI" id="CHEBI:17757"/>
        <dbReference type="ChEBI" id="CHEBI:57783"/>
        <dbReference type="ChEBI" id="CHEBI:58349"/>
        <dbReference type="ChEBI" id="CHEBI:62192"/>
    </reaction>
</comment>
<comment type="subunit">
    <text evidence="1">NDH is composed of at least 16 different subunits, 5 of which are encoded in the nucleus.</text>
</comment>
<comment type="subcellular location">
    <subcellularLocation>
        <location evidence="1">Plastid</location>
        <location evidence="1">Chloroplast thylakoid membrane</location>
        <topology evidence="1">Multi-pass membrane protein</topology>
    </subcellularLocation>
</comment>
<comment type="similarity">
    <text evidence="3">Belongs to the complex I subunit 6 family.</text>
</comment>
<gene>
    <name type="primary">ndhG</name>
</gene>
<sequence length="176" mass="19474">MDLSESLHDFILVFLGSGLILGSLGVVFFTNTIFSAFSLGLVLVCVSLFYILSNSHFVAASQLLIYVGAINVLIIFAVMFMNGSEYDQNFRVWTVGDGITLMVCTSIFISQINTILDTSWHGIIWTTRPNQILEQDLISTSQQIGIHLSTDFFLPFELISIILLVALIGAIFVARQ</sequence>
<evidence type="ECO:0000250" key="1"/>
<evidence type="ECO:0000255" key="2"/>
<evidence type="ECO:0000305" key="3"/>
<geneLocation type="chloroplast"/>
<dbReference type="EC" id="7.1.1.-"/>
<dbReference type="EMBL" id="DQ886273">
    <property type="protein sequence ID" value="ABH88131.1"/>
    <property type="molecule type" value="Genomic_DNA"/>
</dbReference>
<dbReference type="EMBL" id="EU196765">
    <property type="protein sequence ID" value="ABW22815.1"/>
    <property type="molecule type" value="Genomic_DNA"/>
</dbReference>
<dbReference type="RefSeq" id="YP_001122850.1">
    <property type="nucleotide sequence ID" value="NC_009259.1"/>
</dbReference>
<dbReference type="SMR" id="A4GGE9"/>
<dbReference type="GeneID" id="4961800"/>
<dbReference type="KEGG" id="pvu:4961800"/>
<dbReference type="GO" id="GO:0009535">
    <property type="term" value="C:chloroplast thylakoid membrane"/>
    <property type="evidence" value="ECO:0007669"/>
    <property type="project" value="UniProtKB-SubCell"/>
</dbReference>
<dbReference type="GO" id="GO:0008137">
    <property type="term" value="F:NADH dehydrogenase (ubiquinone) activity"/>
    <property type="evidence" value="ECO:0007669"/>
    <property type="project" value="InterPro"/>
</dbReference>
<dbReference type="GO" id="GO:0048038">
    <property type="term" value="F:quinone binding"/>
    <property type="evidence" value="ECO:0007669"/>
    <property type="project" value="UniProtKB-KW"/>
</dbReference>
<dbReference type="FunFam" id="1.20.120.1200:FF:000002">
    <property type="entry name" value="NAD(P)H-quinone oxidoreductase subunit 6, chloroplastic"/>
    <property type="match status" value="1"/>
</dbReference>
<dbReference type="Gene3D" id="1.20.120.1200">
    <property type="entry name" value="NADH-ubiquinone/plastoquinone oxidoreductase chain 6, subunit NuoJ"/>
    <property type="match status" value="1"/>
</dbReference>
<dbReference type="InterPro" id="IPR050290">
    <property type="entry name" value="NAD(P)H-Q_Oxidoreduct_6"/>
</dbReference>
<dbReference type="InterPro" id="IPR001457">
    <property type="entry name" value="NADH_UbQ/plastoQ_OxRdtase_su6"/>
</dbReference>
<dbReference type="InterPro" id="IPR042106">
    <property type="entry name" value="Nuo/plastoQ_OxRdtase_6_NuoJ"/>
</dbReference>
<dbReference type="PANTHER" id="PTHR48479">
    <property type="entry name" value="NAD(P)H-QUINONE OXIDOREDUCTASE SUBUNIT 6, CHLOROPLASTIC"/>
    <property type="match status" value="1"/>
</dbReference>
<dbReference type="PANTHER" id="PTHR48479:SF1">
    <property type="entry name" value="NAD(P)H-QUINONE OXIDOREDUCTASE SUBUNIT 6, CHLOROPLASTIC"/>
    <property type="match status" value="1"/>
</dbReference>
<dbReference type="Pfam" id="PF00499">
    <property type="entry name" value="Oxidored_q3"/>
    <property type="match status" value="1"/>
</dbReference>
<feature type="chain" id="PRO_0000360283" description="NAD(P)H-quinone oxidoreductase subunit 6, chloroplastic">
    <location>
        <begin position="1"/>
        <end position="176"/>
    </location>
</feature>
<feature type="transmembrane region" description="Helical" evidence="2">
    <location>
        <begin position="10"/>
        <end position="30"/>
    </location>
</feature>
<feature type="transmembrane region" description="Helical" evidence="2">
    <location>
        <begin position="32"/>
        <end position="52"/>
    </location>
</feature>
<feature type="transmembrane region" description="Helical" evidence="2">
    <location>
        <begin position="63"/>
        <end position="83"/>
    </location>
</feature>
<feature type="transmembrane region" description="Helical" evidence="2">
    <location>
        <begin position="92"/>
        <end position="112"/>
    </location>
</feature>
<feature type="transmembrane region" description="Helical" evidence="2">
    <location>
        <begin position="152"/>
        <end position="172"/>
    </location>
</feature>
<keyword id="KW-0150">Chloroplast</keyword>
<keyword id="KW-0472">Membrane</keyword>
<keyword id="KW-0520">NAD</keyword>
<keyword id="KW-0521">NADP</keyword>
<keyword id="KW-0934">Plastid</keyword>
<keyword id="KW-0618">Plastoquinone</keyword>
<keyword id="KW-0874">Quinone</keyword>
<keyword id="KW-0793">Thylakoid</keyword>
<keyword id="KW-1278">Translocase</keyword>
<keyword id="KW-0812">Transmembrane</keyword>
<keyword id="KW-1133">Transmembrane helix</keyword>
<keyword id="KW-0813">Transport</keyword>
<reference key="1">
    <citation type="journal article" date="2007" name="BMC Genomics">
        <title>Rapid evolutionary change of common bean (Phaseolus vulgaris L) plastome, and the genomic diversification of legume chloroplasts.</title>
        <authorList>
            <person name="Guo X."/>
            <person name="Castillo-Ramirez S."/>
            <person name="Gonzalez V."/>
            <person name="Bustos P."/>
            <person name="Fernandez-Vazquez J.L."/>
            <person name="Santamaria R.I."/>
            <person name="Arellano J."/>
            <person name="Cevallos M.A."/>
            <person name="Davila G."/>
        </authorList>
    </citation>
    <scope>NUCLEOTIDE SEQUENCE [LARGE SCALE GENOMIC DNA]</scope>
    <source>
        <strain>cv. Negro Jamapa</strain>
    </source>
</reference>
<reference key="2">
    <citation type="submission" date="2007-10" db="EMBL/GenBank/DDBJ databases">
        <title>Complete nucleotide sequence of the plastid genome of the common bean, Phaseolus vulgaris.</title>
        <authorList>
            <person name="Moore M.J."/>
            <person name="Triplett E.W."/>
            <person name="Broughton W.J."/>
            <person name="Soltis P.S."/>
            <person name="Soltis D.E."/>
        </authorList>
    </citation>
    <scope>NUCLEOTIDE SEQUENCE [LARGE SCALE GENOMIC DNA]</scope>
</reference>
<protein>
    <recommendedName>
        <fullName>NAD(P)H-quinone oxidoreductase subunit 6, chloroplastic</fullName>
        <ecNumber>7.1.1.-</ecNumber>
    </recommendedName>
    <alternativeName>
        <fullName>NAD(P)H dehydrogenase subunit 6</fullName>
    </alternativeName>
    <alternativeName>
        <fullName>NADH-plastoquinone oxidoreductase subunit 6</fullName>
    </alternativeName>
</protein>
<name>NU6C_PHAVU</name>